<accession>Q31CN6</accession>
<feature type="signal peptide" evidence="1">
    <location>
        <begin position="1"/>
        <end position="23"/>
    </location>
</feature>
<feature type="chain" id="PRO_0000239680" description="Photosystem II assembly lipoprotein Ycf48" evidence="1">
    <location>
        <begin position="24"/>
        <end position="338"/>
    </location>
</feature>
<feature type="lipid moiety-binding region" description="N-palmitoyl cysteine" evidence="1">
    <location>
        <position position="24"/>
    </location>
</feature>
<feature type="lipid moiety-binding region" description="S-diacylglycerol cysteine" evidence="1">
    <location>
        <position position="24"/>
    </location>
</feature>
<comment type="function">
    <text evidence="1">A factor required for optimal assembly of photosystem II (PSII), acting in the early stages of PSII assembly. Also plays a role in replacement of photodamaged D1 (psbA). Assists YidC in synthesis of chlorophyll-binding proteins.</text>
</comment>
<comment type="subunit">
    <text evidence="1">Part of early PSII assembly complexes which includes D1 (psbA) and PsbI; not found in mature PSII. Binds to the lumenal side of PSII complexes. Interacts with YidC.</text>
</comment>
<comment type="subcellular location">
    <subcellularLocation>
        <location evidence="1">Cellular thylakoid membrane</location>
        <topology evidence="1">Lipid-anchor</topology>
        <orientation evidence="1">Lumenal side</orientation>
    </subcellularLocation>
    <text evidence="1">Associated with a PSII precusor complex on the lumenal side of the thylakoid membrane.</text>
</comment>
<comment type="domain">
    <text evidence="1">A 7-bladed beta-propeller torus, about 55 by 55 Angstroms, with a depth of about 25 Angstroms and a central pore.</text>
</comment>
<comment type="similarity">
    <text evidence="1">Belongs to the Ycf48 family.</text>
</comment>
<protein>
    <recommendedName>
        <fullName evidence="1">Photosystem II assembly lipoprotein Ycf48</fullName>
    </recommendedName>
</protein>
<evidence type="ECO:0000255" key="1">
    <source>
        <dbReference type="HAMAP-Rule" id="MF_01348"/>
    </source>
</evidence>
<proteinExistence type="inferred from homology"/>
<reference key="1">
    <citation type="journal article" date="2006" name="Science">
        <title>Genomic islands and the ecology and evolution of Prochlorococcus.</title>
        <authorList>
            <person name="Coleman M.L."/>
            <person name="Sullivan M.B."/>
            <person name="Martiny A.C."/>
            <person name="Steglich C."/>
            <person name="Barry K."/>
            <person name="Delong E.F."/>
            <person name="Chisholm S.W."/>
        </authorList>
    </citation>
    <scope>NUCLEOTIDE SEQUENCE [LARGE SCALE GENOMIC DNA]</scope>
    <source>
        <strain>MIT 9312</strain>
    </source>
</reference>
<name>YCF48_PROM9</name>
<gene>
    <name evidence="1" type="primary">ycf48</name>
    <name type="ordered locus">PMT9312_0298</name>
</gene>
<dbReference type="EMBL" id="CP000111">
    <property type="protein sequence ID" value="ABB49359.1"/>
    <property type="molecule type" value="Genomic_DNA"/>
</dbReference>
<dbReference type="RefSeq" id="WP_011375861.1">
    <property type="nucleotide sequence ID" value="NC_007577.1"/>
</dbReference>
<dbReference type="SMR" id="Q31CN6"/>
<dbReference type="STRING" id="74546.PMT9312_0298"/>
<dbReference type="KEGG" id="pmi:PMT9312_0298"/>
<dbReference type="eggNOG" id="COG4447">
    <property type="taxonomic scope" value="Bacteria"/>
</dbReference>
<dbReference type="HOGENOM" id="CLU_057027_0_0_3"/>
<dbReference type="OrthoDB" id="9813892at2"/>
<dbReference type="Proteomes" id="UP000002715">
    <property type="component" value="Chromosome"/>
</dbReference>
<dbReference type="GO" id="GO:0009523">
    <property type="term" value="C:photosystem II"/>
    <property type="evidence" value="ECO:0007669"/>
    <property type="project" value="UniProtKB-KW"/>
</dbReference>
<dbReference type="GO" id="GO:0031676">
    <property type="term" value="C:plasma membrane-derived thylakoid membrane"/>
    <property type="evidence" value="ECO:0007669"/>
    <property type="project" value="UniProtKB-SubCell"/>
</dbReference>
<dbReference type="GO" id="GO:0031977">
    <property type="term" value="C:thylakoid lumen"/>
    <property type="evidence" value="ECO:0007669"/>
    <property type="project" value="UniProtKB-UniRule"/>
</dbReference>
<dbReference type="GO" id="GO:0015979">
    <property type="term" value="P:photosynthesis"/>
    <property type="evidence" value="ECO:0007669"/>
    <property type="project" value="UniProtKB-KW"/>
</dbReference>
<dbReference type="Gene3D" id="2.130.10.10">
    <property type="entry name" value="YVTN repeat-like/Quinoprotein amine dehydrogenase"/>
    <property type="match status" value="1"/>
</dbReference>
<dbReference type="HAMAP" id="MF_01348">
    <property type="entry name" value="Ycf48"/>
    <property type="match status" value="1"/>
</dbReference>
<dbReference type="InterPro" id="IPR028203">
    <property type="entry name" value="PSII_CF48-like_dom"/>
</dbReference>
<dbReference type="InterPro" id="IPR015943">
    <property type="entry name" value="WD40/YVTN_repeat-like_dom_sf"/>
</dbReference>
<dbReference type="InterPro" id="IPR016705">
    <property type="entry name" value="Ycf48/Hcf136"/>
</dbReference>
<dbReference type="NCBIfam" id="NF010237">
    <property type="entry name" value="PRK13684.1"/>
    <property type="match status" value="1"/>
</dbReference>
<dbReference type="PANTHER" id="PTHR47199">
    <property type="entry name" value="PHOTOSYSTEM II STABILITY/ASSEMBLY FACTOR HCF136, CHLOROPLASTIC"/>
    <property type="match status" value="1"/>
</dbReference>
<dbReference type="PANTHER" id="PTHR47199:SF2">
    <property type="entry name" value="PHOTOSYSTEM II STABILITY_ASSEMBLY FACTOR HCF136, CHLOROPLASTIC"/>
    <property type="match status" value="1"/>
</dbReference>
<dbReference type="Pfam" id="PF14870">
    <property type="entry name" value="PSII_BNR"/>
    <property type="match status" value="1"/>
</dbReference>
<dbReference type="PIRSF" id="PIRSF017875">
    <property type="entry name" value="PSII_HCF136"/>
    <property type="match status" value="1"/>
</dbReference>
<dbReference type="SUPFAM" id="SSF110296">
    <property type="entry name" value="Oligoxyloglucan reducing end-specific cellobiohydrolase"/>
    <property type="match status" value="1"/>
</dbReference>
<dbReference type="PROSITE" id="PS51257">
    <property type="entry name" value="PROKAR_LIPOPROTEIN"/>
    <property type="match status" value="1"/>
</dbReference>
<organism>
    <name type="scientific">Prochlorococcus marinus (strain MIT 9312)</name>
    <dbReference type="NCBI Taxonomy" id="74546"/>
    <lineage>
        <taxon>Bacteria</taxon>
        <taxon>Bacillati</taxon>
        <taxon>Cyanobacteriota</taxon>
        <taxon>Cyanophyceae</taxon>
        <taxon>Synechococcales</taxon>
        <taxon>Prochlorococcaceae</taxon>
        <taxon>Prochlorococcus</taxon>
    </lineage>
</organism>
<keyword id="KW-0449">Lipoprotein</keyword>
<keyword id="KW-0472">Membrane</keyword>
<keyword id="KW-0564">Palmitate</keyword>
<keyword id="KW-0602">Photosynthesis</keyword>
<keyword id="KW-0604">Photosystem II</keyword>
<keyword id="KW-0732">Signal</keyword>
<keyword id="KW-0793">Thylakoid</keyword>
<sequence>MKKIITSFPNLLLSILLCFVLSSCSSTGVKMSDSSPWKTIQFQDQANALDVDFIDNNNGFLVGSNRLIMESNDGGETWEKRNLDLPSEENFRLIDIDFKGQEGWLIGQPSLVMHTLDAGKNWTRLSLGNKLPGQPYLITTVDDGVAELATTAGAIYQTSDSGESWNAKVLDASGSGGVRDLRRTDKGDYVSVSSLGNFFSTLENDSNSWIAHQRASSKRVQSIGFNPEGSLWMLSRGAEIRFNEDTNDLENWSKPIIPILNGYNYLDMGWDPNGDIWAGGGNGTLIVSKDQGKTWNKYPIAAELPTNYIKIVFLDKEALDNQKGFVLGERGYILKWNS</sequence>